<keyword id="KW-0030">Aminoacyl-tRNA synthetase</keyword>
<keyword id="KW-0067">ATP-binding</keyword>
<keyword id="KW-0963">Cytoplasm</keyword>
<keyword id="KW-0436">Ligase</keyword>
<keyword id="KW-0547">Nucleotide-binding</keyword>
<keyword id="KW-0648">Protein biosynthesis</keyword>
<reference key="1">
    <citation type="journal article" date="2001" name="Microb. Drug Resist.">
        <title>Annotated draft genomic sequence from a Streptococcus pneumoniae type 19F clinical isolate.</title>
        <authorList>
            <person name="Dopazo J."/>
            <person name="Mendoza A."/>
            <person name="Herrero J."/>
            <person name="Caldara F."/>
            <person name="Humbert Y."/>
            <person name="Friedli L."/>
            <person name="Guerrier M."/>
            <person name="Grand-Schenk E."/>
            <person name="Gandin C."/>
            <person name="de Francesco M."/>
            <person name="Polissi A."/>
            <person name="Buell G."/>
            <person name="Feger G."/>
            <person name="Garcia E."/>
            <person name="Peitsch M."/>
            <person name="Garcia-Bustos J.F."/>
        </authorList>
    </citation>
    <scope>NUCLEOTIDE SEQUENCE [LARGE SCALE GENOMIC DNA]</scope>
    <source>
        <strain>G54</strain>
    </source>
</reference>
<reference key="2">
    <citation type="submission" date="2008-03" db="EMBL/GenBank/DDBJ databases">
        <title>Pneumococcal beta glucoside metabolism investigated by whole genome comparison.</title>
        <authorList>
            <person name="Mulas L."/>
            <person name="Trappetti C."/>
            <person name="Hakenbeck R."/>
            <person name="Iannelli F."/>
            <person name="Pozzi G."/>
            <person name="Davidsen T.M."/>
            <person name="Tettelin H."/>
            <person name="Oggioni M."/>
        </authorList>
    </citation>
    <scope>NUCLEOTIDE SEQUENCE [LARGE SCALE GENOMIC DNA]</scope>
    <source>
        <strain>G54</strain>
    </source>
</reference>
<proteinExistence type="inferred from homology"/>
<organism>
    <name type="scientific">Streptococcus pneumoniae serotype 19F (strain G54)</name>
    <dbReference type="NCBI Taxonomy" id="512566"/>
    <lineage>
        <taxon>Bacteria</taxon>
        <taxon>Bacillati</taxon>
        <taxon>Bacillota</taxon>
        <taxon>Bacilli</taxon>
        <taxon>Lactobacillales</taxon>
        <taxon>Streptococcaceae</taxon>
        <taxon>Streptococcus</taxon>
    </lineage>
</organism>
<gene>
    <name evidence="1" type="primary">proS</name>
    <name type="ordered locus">SPG_0249</name>
</gene>
<dbReference type="EC" id="6.1.1.15" evidence="1"/>
<dbReference type="EMBL" id="CP001015">
    <property type="protein sequence ID" value="ACF56045.1"/>
    <property type="molecule type" value="Genomic_DNA"/>
</dbReference>
<dbReference type="SMR" id="B5E6T8"/>
<dbReference type="KEGG" id="spx:SPG_0249"/>
<dbReference type="HOGENOM" id="CLU_016739_0_0_9"/>
<dbReference type="GO" id="GO:0005829">
    <property type="term" value="C:cytosol"/>
    <property type="evidence" value="ECO:0007669"/>
    <property type="project" value="TreeGrafter"/>
</dbReference>
<dbReference type="GO" id="GO:0002161">
    <property type="term" value="F:aminoacyl-tRNA deacylase activity"/>
    <property type="evidence" value="ECO:0007669"/>
    <property type="project" value="InterPro"/>
</dbReference>
<dbReference type="GO" id="GO:0005524">
    <property type="term" value="F:ATP binding"/>
    <property type="evidence" value="ECO:0007669"/>
    <property type="project" value="UniProtKB-UniRule"/>
</dbReference>
<dbReference type="GO" id="GO:0140096">
    <property type="term" value="F:catalytic activity, acting on a protein"/>
    <property type="evidence" value="ECO:0007669"/>
    <property type="project" value="UniProtKB-ARBA"/>
</dbReference>
<dbReference type="GO" id="GO:0004827">
    <property type="term" value="F:proline-tRNA ligase activity"/>
    <property type="evidence" value="ECO:0007669"/>
    <property type="project" value="UniProtKB-UniRule"/>
</dbReference>
<dbReference type="GO" id="GO:0016740">
    <property type="term" value="F:transferase activity"/>
    <property type="evidence" value="ECO:0007669"/>
    <property type="project" value="UniProtKB-ARBA"/>
</dbReference>
<dbReference type="GO" id="GO:0006433">
    <property type="term" value="P:prolyl-tRNA aminoacylation"/>
    <property type="evidence" value="ECO:0007669"/>
    <property type="project" value="UniProtKB-UniRule"/>
</dbReference>
<dbReference type="CDD" id="cd04334">
    <property type="entry name" value="ProRS-INS"/>
    <property type="match status" value="1"/>
</dbReference>
<dbReference type="CDD" id="cd00861">
    <property type="entry name" value="ProRS_anticodon_short"/>
    <property type="match status" value="1"/>
</dbReference>
<dbReference type="CDD" id="cd00779">
    <property type="entry name" value="ProRS_core_prok"/>
    <property type="match status" value="1"/>
</dbReference>
<dbReference type="FunFam" id="3.30.930.10:FF:000062">
    <property type="entry name" value="Proline--tRNA ligase"/>
    <property type="match status" value="1"/>
</dbReference>
<dbReference type="FunFam" id="3.30.930.10:FF:000070">
    <property type="entry name" value="Proline--tRNA ligase"/>
    <property type="match status" value="1"/>
</dbReference>
<dbReference type="FunFam" id="3.40.50.800:FF:000011">
    <property type="entry name" value="Proline--tRNA ligase"/>
    <property type="match status" value="1"/>
</dbReference>
<dbReference type="FunFam" id="3.90.960.10:FF:000004">
    <property type="entry name" value="Proline--tRNA ligase"/>
    <property type="match status" value="1"/>
</dbReference>
<dbReference type="Gene3D" id="3.40.50.800">
    <property type="entry name" value="Anticodon-binding domain"/>
    <property type="match status" value="1"/>
</dbReference>
<dbReference type="Gene3D" id="3.30.930.10">
    <property type="entry name" value="Bira Bifunctional Protein, Domain 2"/>
    <property type="match status" value="2"/>
</dbReference>
<dbReference type="Gene3D" id="3.90.960.10">
    <property type="entry name" value="YbaK/aminoacyl-tRNA synthetase-associated domain"/>
    <property type="match status" value="1"/>
</dbReference>
<dbReference type="HAMAP" id="MF_01569">
    <property type="entry name" value="Pro_tRNA_synth_type1"/>
    <property type="match status" value="1"/>
</dbReference>
<dbReference type="InterPro" id="IPR002314">
    <property type="entry name" value="aa-tRNA-synt_IIb"/>
</dbReference>
<dbReference type="InterPro" id="IPR006195">
    <property type="entry name" value="aa-tRNA-synth_II"/>
</dbReference>
<dbReference type="InterPro" id="IPR045864">
    <property type="entry name" value="aa-tRNA-synth_II/BPL/LPL"/>
</dbReference>
<dbReference type="InterPro" id="IPR004154">
    <property type="entry name" value="Anticodon-bd"/>
</dbReference>
<dbReference type="InterPro" id="IPR036621">
    <property type="entry name" value="Anticodon-bd_dom_sf"/>
</dbReference>
<dbReference type="InterPro" id="IPR002316">
    <property type="entry name" value="Pro-tRNA-ligase_IIa"/>
</dbReference>
<dbReference type="InterPro" id="IPR004500">
    <property type="entry name" value="Pro-tRNA-synth_IIa_bac-type"/>
</dbReference>
<dbReference type="InterPro" id="IPR023717">
    <property type="entry name" value="Pro-tRNA-Synthase_IIa_type1"/>
</dbReference>
<dbReference type="InterPro" id="IPR050062">
    <property type="entry name" value="Pro-tRNA_synthetase"/>
</dbReference>
<dbReference type="InterPro" id="IPR044140">
    <property type="entry name" value="ProRS_anticodon_short"/>
</dbReference>
<dbReference type="InterPro" id="IPR033730">
    <property type="entry name" value="ProRS_core_prok"/>
</dbReference>
<dbReference type="InterPro" id="IPR036754">
    <property type="entry name" value="YbaK/aa-tRNA-synt-asso_dom_sf"/>
</dbReference>
<dbReference type="InterPro" id="IPR007214">
    <property type="entry name" value="YbaK/aa-tRNA-synth-assoc-dom"/>
</dbReference>
<dbReference type="NCBIfam" id="NF006625">
    <property type="entry name" value="PRK09194.1"/>
    <property type="match status" value="1"/>
</dbReference>
<dbReference type="NCBIfam" id="TIGR00409">
    <property type="entry name" value="proS_fam_II"/>
    <property type="match status" value="2"/>
</dbReference>
<dbReference type="PANTHER" id="PTHR42753">
    <property type="entry name" value="MITOCHONDRIAL RIBOSOME PROTEIN L39/PROLYL-TRNA LIGASE FAMILY MEMBER"/>
    <property type="match status" value="1"/>
</dbReference>
<dbReference type="PANTHER" id="PTHR42753:SF2">
    <property type="entry name" value="PROLINE--TRNA LIGASE"/>
    <property type="match status" value="1"/>
</dbReference>
<dbReference type="Pfam" id="PF03129">
    <property type="entry name" value="HGTP_anticodon"/>
    <property type="match status" value="1"/>
</dbReference>
<dbReference type="Pfam" id="PF00587">
    <property type="entry name" value="tRNA-synt_2b"/>
    <property type="match status" value="1"/>
</dbReference>
<dbReference type="Pfam" id="PF04073">
    <property type="entry name" value="tRNA_edit"/>
    <property type="match status" value="1"/>
</dbReference>
<dbReference type="PRINTS" id="PR01046">
    <property type="entry name" value="TRNASYNTHPRO"/>
</dbReference>
<dbReference type="SUPFAM" id="SSF52954">
    <property type="entry name" value="Class II aaRS ABD-related"/>
    <property type="match status" value="1"/>
</dbReference>
<dbReference type="SUPFAM" id="SSF55681">
    <property type="entry name" value="Class II aaRS and biotin synthetases"/>
    <property type="match status" value="1"/>
</dbReference>
<dbReference type="SUPFAM" id="SSF55826">
    <property type="entry name" value="YbaK/ProRS associated domain"/>
    <property type="match status" value="1"/>
</dbReference>
<dbReference type="PROSITE" id="PS50862">
    <property type="entry name" value="AA_TRNA_LIGASE_II"/>
    <property type="match status" value="1"/>
</dbReference>
<protein>
    <recommendedName>
        <fullName evidence="1">Proline--tRNA ligase</fullName>
        <ecNumber evidence="1">6.1.1.15</ecNumber>
    </recommendedName>
    <alternativeName>
        <fullName evidence="1">Prolyl-tRNA synthetase</fullName>
        <shortName evidence="1">ProRS</shortName>
    </alternativeName>
</protein>
<name>SYP_STRP4</name>
<accession>B5E6T8</accession>
<evidence type="ECO:0000255" key="1">
    <source>
        <dbReference type="HAMAP-Rule" id="MF_01569"/>
    </source>
</evidence>
<sequence length="617" mass="68611">MKQSKMPIPTLREMPSDAQVISHALMLRAGYVRQVSAGVYSYLPLANRVIEKAKNIMRQEFEKIGAVEMLAPALLSAELWRESGRYETYGEDLYKLKNREKSDFILGPTHEETFTAIVRDSVKSYKQLPLNLYQIQPKYRDEKRPRNGLLRTREFIMKDAYSFHANYDSLDSVYDEYKAAYERIFTRSGLDFKAIIGDGGAMGGKDSQEFMAITSARTDLDRWVVLDKSVASFDEIPAEVQEEIKAELLKWIVSGEDTIAYSSESSYAANLEMATNEYKPSNRVVAEEEVTRVATPDVKSIDEVAAFLNVPEEQTIKTLFYIADGELVAALLVGNDQLNEVKLKNHLGADFFDVASEEEVANVVQAGFGSLGPVGLPENIKIIADRKVQDVRNAVVGANEDGYHLTGVNPGRDFTSEYVDIREVREGEISPDGQGVLNFARGIEIGHIFKLGTRYSASMGADVLDENGRAVPIIMGCYGIGVSRLLSAVMEQHARLFVNKTPKGEYRYAWGINFPKELAPFDVHLITVNVKDEEAQALTEKLEASLMGAGYEVLTDDRNERVGVKFSDSDLIGLPIRITVGKKAADGIVEVKIKATGDTIEVHADNVLETLEILSKK</sequence>
<feature type="chain" id="PRO_1000199428" description="Proline--tRNA ligase">
    <location>
        <begin position="1"/>
        <end position="617"/>
    </location>
</feature>
<comment type="function">
    <text evidence="1">Catalyzes the attachment of proline to tRNA(Pro) in a two-step reaction: proline is first activated by ATP to form Pro-AMP and then transferred to the acceptor end of tRNA(Pro). As ProRS can inadvertently accommodate and process non-cognate amino acids such as alanine and cysteine, to avoid such errors it has two additional distinct editing activities against alanine. One activity is designated as 'pretransfer' editing and involves the tRNA(Pro)-independent hydrolysis of activated Ala-AMP. The other activity is designated 'posttransfer' editing and involves deacylation of mischarged Ala-tRNA(Pro). The misacylated Cys-tRNA(Pro) is not edited by ProRS.</text>
</comment>
<comment type="catalytic activity">
    <reaction evidence="1">
        <text>tRNA(Pro) + L-proline + ATP = L-prolyl-tRNA(Pro) + AMP + diphosphate</text>
        <dbReference type="Rhea" id="RHEA:14305"/>
        <dbReference type="Rhea" id="RHEA-COMP:9700"/>
        <dbReference type="Rhea" id="RHEA-COMP:9702"/>
        <dbReference type="ChEBI" id="CHEBI:30616"/>
        <dbReference type="ChEBI" id="CHEBI:33019"/>
        <dbReference type="ChEBI" id="CHEBI:60039"/>
        <dbReference type="ChEBI" id="CHEBI:78442"/>
        <dbReference type="ChEBI" id="CHEBI:78532"/>
        <dbReference type="ChEBI" id="CHEBI:456215"/>
        <dbReference type="EC" id="6.1.1.15"/>
    </reaction>
</comment>
<comment type="subunit">
    <text evidence="1">Homodimer.</text>
</comment>
<comment type="subcellular location">
    <subcellularLocation>
        <location evidence="1">Cytoplasm</location>
    </subcellularLocation>
</comment>
<comment type="domain">
    <text evidence="1">Consists of three domains: the N-terminal catalytic domain, the editing domain and the C-terminal anticodon-binding domain.</text>
</comment>
<comment type="similarity">
    <text evidence="1">Belongs to the class-II aminoacyl-tRNA synthetase family. ProS type 1 subfamily.</text>
</comment>